<feature type="chain" id="PRO_1000148098" description="1-pyrroline-5-carboxylate dehydrogenase">
    <location>
        <begin position="1"/>
        <end position="515"/>
    </location>
</feature>
<feature type="active site" evidence="1">
    <location>
        <position position="286"/>
    </location>
</feature>
<feature type="active site" evidence="1">
    <location>
        <position position="320"/>
    </location>
</feature>
<protein>
    <recommendedName>
        <fullName evidence="1">1-pyrroline-5-carboxylate dehydrogenase</fullName>
        <shortName evidence="1">P5C dehydrogenase</shortName>
        <ecNumber evidence="1">1.2.1.88</ecNumber>
    </recommendedName>
    <alternativeName>
        <fullName evidence="1">L-glutamate gamma-semialdehyde dehydrogenase</fullName>
    </alternativeName>
</protein>
<reference key="1">
    <citation type="journal article" date="2009" name="J. Bacteriol.">
        <title>Complete genome sequence of the extremophilic Bacillus cereus strain Q1 with industrial applications.</title>
        <authorList>
            <person name="Xiong Z."/>
            <person name="Jiang Y."/>
            <person name="Qi D."/>
            <person name="Lu H."/>
            <person name="Yang F."/>
            <person name="Yang J."/>
            <person name="Chen L."/>
            <person name="Sun L."/>
            <person name="Xu X."/>
            <person name="Xue Y."/>
            <person name="Zhu Y."/>
            <person name="Jin Q."/>
        </authorList>
    </citation>
    <scope>NUCLEOTIDE SEQUENCE [LARGE SCALE GENOMIC DNA]</scope>
    <source>
        <strain>Q1</strain>
    </source>
</reference>
<organism>
    <name type="scientific">Bacillus cereus (strain Q1)</name>
    <dbReference type="NCBI Taxonomy" id="361100"/>
    <lineage>
        <taxon>Bacteria</taxon>
        <taxon>Bacillati</taxon>
        <taxon>Bacillota</taxon>
        <taxon>Bacilli</taxon>
        <taxon>Bacillales</taxon>
        <taxon>Bacillaceae</taxon>
        <taxon>Bacillus</taxon>
        <taxon>Bacillus cereus group</taxon>
    </lineage>
</organism>
<sequence length="515" mass="56225">MVVAYKHEPFTDFSVEANKLAFEEGLKKVESYLGQDYPLIIGGEKITTEDKIVSVNPANKEELVGRVSKASRELAEKAMQVADETFQTWRKSKPEMRADILFRAAAIVRRRKHEFSAILVKEAGKPWNEADADTAEAIDFMEYYGRQMLKLKDGIPVESRPIEYNRFSYIPLGVGVIISPWNFPFAIMAGMTTAALVSGNTVLLKPASTTPVVAAKFMEVLEEAGLPAGVVNFVPGNGSEVGDYLVDHPRTRFISFTGSRDVGIRIYERAAKVNPGQIWLKRVIAEMGGKDTIVVDKEADLELAAKSIVASAFGFSGQKCSACSRAVIHEDVYDHVLNRAVELTKELTVANPAVLGTNMGPVNDQAAFDKVMSYVAIGKEEGRILAGGEGDDSKGWFIQPTIVADVAEDARLMKEEIFGPVVAFCKAKDFDHALAIANNTEYGLTGAVISNNRDHIEKAREDFHVGNLYFNRGCTGAIVGYQPFGGFNMSGTDSKAGGPDYLALHMQAKTTSETL</sequence>
<gene>
    <name evidence="1" type="primary">rocA</name>
    <name type="ordered locus">BCQ_0360</name>
</gene>
<evidence type="ECO:0000255" key="1">
    <source>
        <dbReference type="HAMAP-Rule" id="MF_00733"/>
    </source>
</evidence>
<accession>B9J1L9</accession>
<name>ROCA_BACCQ</name>
<dbReference type="EC" id="1.2.1.88" evidence="1"/>
<dbReference type="EMBL" id="CP000227">
    <property type="protein sequence ID" value="ACM10832.1"/>
    <property type="molecule type" value="Genomic_DNA"/>
</dbReference>
<dbReference type="SMR" id="B9J1L9"/>
<dbReference type="KEGG" id="bcq:BCQ_0360"/>
<dbReference type="HOGENOM" id="CLU_005391_0_0_9"/>
<dbReference type="UniPathway" id="UPA00261">
    <property type="reaction ID" value="UER00374"/>
</dbReference>
<dbReference type="Proteomes" id="UP000000441">
    <property type="component" value="Chromosome"/>
</dbReference>
<dbReference type="GO" id="GO:0009898">
    <property type="term" value="C:cytoplasmic side of plasma membrane"/>
    <property type="evidence" value="ECO:0007669"/>
    <property type="project" value="TreeGrafter"/>
</dbReference>
<dbReference type="GO" id="GO:0003842">
    <property type="term" value="F:1-pyrroline-5-carboxylate dehydrogenase activity"/>
    <property type="evidence" value="ECO:0007669"/>
    <property type="project" value="UniProtKB-UniRule"/>
</dbReference>
<dbReference type="GO" id="GO:0006537">
    <property type="term" value="P:glutamate biosynthetic process"/>
    <property type="evidence" value="ECO:0007669"/>
    <property type="project" value="UniProtKB-UniRule"/>
</dbReference>
<dbReference type="GO" id="GO:0010133">
    <property type="term" value="P:proline catabolic process to glutamate"/>
    <property type="evidence" value="ECO:0007669"/>
    <property type="project" value="UniProtKB-UniPathway"/>
</dbReference>
<dbReference type="CDD" id="cd07124">
    <property type="entry name" value="ALDH_PutA-P5CDH-RocA"/>
    <property type="match status" value="1"/>
</dbReference>
<dbReference type="FunFam" id="3.40.309.10:FF:000005">
    <property type="entry name" value="1-pyrroline-5-carboxylate dehydrogenase 1"/>
    <property type="match status" value="1"/>
</dbReference>
<dbReference type="FunFam" id="3.40.605.10:FF:000045">
    <property type="entry name" value="1-pyrroline-5-carboxylate dehydrogenase 1"/>
    <property type="match status" value="1"/>
</dbReference>
<dbReference type="Gene3D" id="3.40.605.10">
    <property type="entry name" value="Aldehyde Dehydrogenase, Chain A, domain 1"/>
    <property type="match status" value="1"/>
</dbReference>
<dbReference type="Gene3D" id="3.40.309.10">
    <property type="entry name" value="Aldehyde Dehydrogenase, Chain A, domain 2"/>
    <property type="match status" value="1"/>
</dbReference>
<dbReference type="HAMAP" id="MF_00733">
    <property type="entry name" value="RocA"/>
    <property type="match status" value="1"/>
</dbReference>
<dbReference type="InterPro" id="IPR016161">
    <property type="entry name" value="Ald_DH/histidinol_DH"/>
</dbReference>
<dbReference type="InterPro" id="IPR016163">
    <property type="entry name" value="Ald_DH_C"/>
</dbReference>
<dbReference type="InterPro" id="IPR016160">
    <property type="entry name" value="Ald_DH_CS_CYS"/>
</dbReference>
<dbReference type="InterPro" id="IPR029510">
    <property type="entry name" value="Ald_DH_CS_GLU"/>
</dbReference>
<dbReference type="InterPro" id="IPR016162">
    <property type="entry name" value="Ald_DH_N"/>
</dbReference>
<dbReference type="InterPro" id="IPR015590">
    <property type="entry name" value="Aldehyde_DH_dom"/>
</dbReference>
<dbReference type="InterPro" id="IPR050485">
    <property type="entry name" value="Proline_metab_enzyme"/>
</dbReference>
<dbReference type="InterPro" id="IPR005932">
    <property type="entry name" value="RocA"/>
</dbReference>
<dbReference type="InterPro" id="IPR047597">
    <property type="entry name" value="RocA_bacillales"/>
</dbReference>
<dbReference type="NCBIfam" id="TIGR01237">
    <property type="entry name" value="D1pyr5carbox2"/>
    <property type="match status" value="1"/>
</dbReference>
<dbReference type="NCBIfam" id="NF002852">
    <property type="entry name" value="PRK03137.1"/>
    <property type="match status" value="1"/>
</dbReference>
<dbReference type="PANTHER" id="PTHR42862">
    <property type="entry name" value="DELTA-1-PYRROLINE-5-CARBOXYLATE DEHYDROGENASE 1, ISOFORM A-RELATED"/>
    <property type="match status" value="1"/>
</dbReference>
<dbReference type="PANTHER" id="PTHR42862:SF1">
    <property type="entry name" value="DELTA-1-PYRROLINE-5-CARBOXYLATE DEHYDROGENASE 2, ISOFORM A-RELATED"/>
    <property type="match status" value="1"/>
</dbReference>
<dbReference type="Pfam" id="PF00171">
    <property type="entry name" value="Aldedh"/>
    <property type="match status" value="1"/>
</dbReference>
<dbReference type="SUPFAM" id="SSF53720">
    <property type="entry name" value="ALDH-like"/>
    <property type="match status" value="1"/>
</dbReference>
<dbReference type="PROSITE" id="PS00070">
    <property type="entry name" value="ALDEHYDE_DEHYDR_CYS"/>
    <property type="match status" value="1"/>
</dbReference>
<dbReference type="PROSITE" id="PS00687">
    <property type="entry name" value="ALDEHYDE_DEHYDR_GLU"/>
    <property type="match status" value="1"/>
</dbReference>
<keyword id="KW-0520">NAD</keyword>
<keyword id="KW-0560">Oxidoreductase</keyword>
<proteinExistence type="inferred from homology"/>
<comment type="catalytic activity">
    <reaction evidence="1">
        <text>L-glutamate 5-semialdehyde + NAD(+) + H2O = L-glutamate + NADH + 2 H(+)</text>
        <dbReference type="Rhea" id="RHEA:30235"/>
        <dbReference type="ChEBI" id="CHEBI:15377"/>
        <dbReference type="ChEBI" id="CHEBI:15378"/>
        <dbReference type="ChEBI" id="CHEBI:29985"/>
        <dbReference type="ChEBI" id="CHEBI:57540"/>
        <dbReference type="ChEBI" id="CHEBI:57945"/>
        <dbReference type="ChEBI" id="CHEBI:58066"/>
        <dbReference type="EC" id="1.2.1.88"/>
    </reaction>
</comment>
<comment type="pathway">
    <text evidence="1">Amino-acid degradation; L-proline degradation into L-glutamate; L-glutamate from L-proline: step 2/2.</text>
</comment>
<comment type="similarity">
    <text evidence="1">Belongs to the aldehyde dehydrogenase family. RocA subfamily.</text>
</comment>